<name>METJ_YERP3</name>
<evidence type="ECO:0000255" key="1">
    <source>
        <dbReference type="HAMAP-Rule" id="MF_00744"/>
    </source>
</evidence>
<sequence>MAEWNGEYVSPYAEHGKKSEQVKKITVSIPLKVLKILTDERTRRQVNNLRHATNSELLCEAFLHAFTGQPLPNDEDLRKERSDEIPEAAKILMRELGVDPDTWEY</sequence>
<proteinExistence type="inferred from homology"/>
<gene>
    <name evidence="1" type="primary">metJ</name>
    <name type="ordered locus">YpsIP31758_0120</name>
</gene>
<keyword id="KW-0028">Amino-acid biosynthesis</keyword>
<keyword id="KW-0963">Cytoplasm</keyword>
<keyword id="KW-0238">DNA-binding</keyword>
<keyword id="KW-0486">Methionine biosynthesis</keyword>
<keyword id="KW-0678">Repressor</keyword>
<keyword id="KW-0804">Transcription</keyword>
<keyword id="KW-0805">Transcription regulation</keyword>
<comment type="function">
    <text evidence="1">This regulatory protein, when combined with SAM (S-adenosylmethionine) represses the expression of the methionine regulon and of enzymes involved in SAM synthesis.</text>
</comment>
<comment type="subunit">
    <text evidence="1">Homodimer.</text>
</comment>
<comment type="subcellular location">
    <subcellularLocation>
        <location evidence="1">Cytoplasm</location>
    </subcellularLocation>
</comment>
<comment type="domain">
    <text>Does not bind DNA by a helix-turn-helix motif.</text>
</comment>
<comment type="similarity">
    <text evidence="1">Belongs to the MetJ family.</text>
</comment>
<dbReference type="EMBL" id="CP000720">
    <property type="protein sequence ID" value="ABS48838.1"/>
    <property type="molecule type" value="Genomic_DNA"/>
</dbReference>
<dbReference type="RefSeq" id="WP_004392248.1">
    <property type="nucleotide sequence ID" value="NC_009708.1"/>
</dbReference>
<dbReference type="SMR" id="A7FCZ2"/>
<dbReference type="GeneID" id="97458248"/>
<dbReference type="KEGG" id="ypi:YpsIP31758_0120"/>
<dbReference type="HOGENOM" id="CLU_142318_0_0_6"/>
<dbReference type="Proteomes" id="UP000002412">
    <property type="component" value="Chromosome"/>
</dbReference>
<dbReference type="GO" id="GO:0005737">
    <property type="term" value="C:cytoplasm"/>
    <property type="evidence" value="ECO:0007669"/>
    <property type="project" value="UniProtKB-SubCell"/>
</dbReference>
<dbReference type="GO" id="GO:0003677">
    <property type="term" value="F:DNA binding"/>
    <property type="evidence" value="ECO:0007669"/>
    <property type="project" value="UniProtKB-KW"/>
</dbReference>
<dbReference type="GO" id="GO:0003700">
    <property type="term" value="F:DNA-binding transcription factor activity"/>
    <property type="evidence" value="ECO:0007669"/>
    <property type="project" value="InterPro"/>
</dbReference>
<dbReference type="GO" id="GO:0009086">
    <property type="term" value="P:methionine biosynthetic process"/>
    <property type="evidence" value="ECO:0007669"/>
    <property type="project" value="UniProtKB-UniRule"/>
</dbReference>
<dbReference type="GO" id="GO:0045892">
    <property type="term" value="P:negative regulation of DNA-templated transcription"/>
    <property type="evidence" value="ECO:0007669"/>
    <property type="project" value="UniProtKB-UniRule"/>
</dbReference>
<dbReference type="CDD" id="cd00490">
    <property type="entry name" value="Met_repressor_MetJ"/>
    <property type="match status" value="1"/>
</dbReference>
<dbReference type="FunFam" id="1.10.140.10:FF:000001">
    <property type="entry name" value="Met repressor"/>
    <property type="match status" value="1"/>
</dbReference>
<dbReference type="Gene3D" id="1.10.140.10">
    <property type="entry name" value="MET Apo-Repressor, subunit A"/>
    <property type="match status" value="1"/>
</dbReference>
<dbReference type="HAMAP" id="MF_00744">
    <property type="entry name" value="MetJ"/>
    <property type="match status" value="1"/>
</dbReference>
<dbReference type="InterPro" id="IPR002084">
    <property type="entry name" value="Met_repressor_MetJ"/>
</dbReference>
<dbReference type="InterPro" id="IPR023453">
    <property type="entry name" value="Met_repressor_MetJ_dom_sf"/>
</dbReference>
<dbReference type="InterPro" id="IPR010985">
    <property type="entry name" value="Ribbon_hlx_hlx"/>
</dbReference>
<dbReference type="NCBIfam" id="NF003622">
    <property type="entry name" value="PRK05264.1"/>
    <property type="match status" value="1"/>
</dbReference>
<dbReference type="Pfam" id="PF01340">
    <property type="entry name" value="MetJ"/>
    <property type="match status" value="1"/>
</dbReference>
<dbReference type="SUPFAM" id="SSF47598">
    <property type="entry name" value="Ribbon-helix-helix"/>
    <property type="match status" value="1"/>
</dbReference>
<feature type="chain" id="PRO_1000062174" description="Met repressor">
    <location>
        <begin position="1"/>
        <end position="105"/>
    </location>
</feature>
<reference key="1">
    <citation type="journal article" date="2007" name="PLoS Genet.">
        <title>The complete genome sequence of Yersinia pseudotuberculosis IP31758, the causative agent of Far East scarlet-like fever.</title>
        <authorList>
            <person name="Eppinger M."/>
            <person name="Rosovitz M.J."/>
            <person name="Fricke W.F."/>
            <person name="Rasko D.A."/>
            <person name="Kokorina G."/>
            <person name="Fayolle C."/>
            <person name="Lindler L.E."/>
            <person name="Carniel E."/>
            <person name="Ravel J."/>
        </authorList>
    </citation>
    <scope>NUCLEOTIDE SEQUENCE [LARGE SCALE GENOMIC DNA]</scope>
    <source>
        <strain>IP 31758</strain>
    </source>
</reference>
<organism>
    <name type="scientific">Yersinia pseudotuberculosis serotype O:1b (strain IP 31758)</name>
    <dbReference type="NCBI Taxonomy" id="349747"/>
    <lineage>
        <taxon>Bacteria</taxon>
        <taxon>Pseudomonadati</taxon>
        <taxon>Pseudomonadota</taxon>
        <taxon>Gammaproteobacteria</taxon>
        <taxon>Enterobacterales</taxon>
        <taxon>Yersiniaceae</taxon>
        <taxon>Yersinia</taxon>
    </lineage>
</organism>
<protein>
    <recommendedName>
        <fullName evidence="1">Met repressor</fullName>
    </recommendedName>
    <alternativeName>
        <fullName evidence="1">Met regulon regulatory protein MetJ</fullName>
    </alternativeName>
</protein>
<accession>A7FCZ2</accession>